<name>NDT80_YEAST</name>
<sequence>MNEMENTDPVLQDDLVSKYERELSTEQEEDTPVILTQLNEDGTTSNYFDKRKLKIAPRSTLQFKVGPPFELVRDYCPVVESHTGRTLDLRIIPRIDRGFDHIDEEWVGYKRNYFTLVSTFETANCDLDTFLKSSFDLLVEDSSVESRLRVQYFAIKIKAKNDDDDTEINLVQHTAKRDKGPQFCPSVCPLVPSPLPKHQIIREASNVRNITKMKKYDSTFYLHRDHVNYEEYGVDSLLFSYPEDSIQKVARYERVQFASSISVKKPSQQNKHFSLHVILGAVVDPDTFHGENPGIPYDELALKNGSKGMFVYLQEMKTPPLIIRGRSPSNYASSQRITVRTPSSVNSSQNSTKRKMPSMAQPLNESCLNARPSKRRSKVALGAPNSGASISPIKSRQSTPMEASKENEDPFFRPNKRVETLEHIQNKLGALKNQCPDSSLKYPSSSSRGMEGCLEKEDLVYSSSFSVNMKQIELKPARSFEHENIFKVGSLAFKKINELPHENYDITIEKKSMEQNYLRPEIGSRSECKTSYGNELSLSNISFSILPNSAENFHLETALFPATEEDVPRTFSRILETGSFQNYYQKMDAENADRVYSKGVKLIASGTLPSGIFNREELFEEDSFYKY</sequence>
<feature type="chain" id="PRO_0000096772" description="Meiosis-specific transcription factor NDT80">
    <location>
        <begin position="1"/>
        <end position="627"/>
    </location>
</feature>
<feature type="DNA-binding region" description="NDT80" evidence="1">
    <location>
        <begin position="28"/>
        <end position="335"/>
    </location>
</feature>
<feature type="region of interest" description="Disordered" evidence="2">
    <location>
        <begin position="324"/>
        <end position="410"/>
    </location>
</feature>
<feature type="compositionally biased region" description="Polar residues" evidence="2">
    <location>
        <begin position="327"/>
        <end position="351"/>
    </location>
</feature>
<feature type="compositionally biased region" description="Polar residues" evidence="2">
    <location>
        <begin position="386"/>
        <end position="401"/>
    </location>
</feature>
<feature type="site" description="Interaction with DNA">
    <location>
        <position position="58"/>
    </location>
</feature>
<feature type="site" description="Interaction with DNA">
    <location>
        <position position="111"/>
    </location>
</feature>
<feature type="site" description="Interaction with DNA">
    <location>
        <position position="177"/>
    </location>
</feature>
<feature type="site" description="Interaction with DNA">
    <location>
        <position position="208"/>
    </location>
</feature>
<feature type="site" description="Interaction with DNA">
    <location>
        <position position="254"/>
    </location>
</feature>
<feature type="site" description="Interaction with DNA">
    <location>
        <position position="326"/>
    </location>
</feature>
<feature type="mutagenesis site" description="Reduces DNA-binding by 70%." evidence="12">
    <original>K</original>
    <variation>A</variation>
    <location>
        <position position="50"/>
    </location>
</feature>
<feature type="mutagenesis site" description="Reduces DNA-binding by 50%." evidence="12">
    <original>K</original>
    <variation>A</variation>
    <location>
        <position position="54"/>
    </location>
</feature>
<feature type="mutagenesis site" description="Reduces DNA-binding by 65%.">
    <original>P</original>
    <variation>A</variation>
    <location>
        <position position="57"/>
    </location>
</feature>
<feature type="mutagenesis site" description="Reduces DNA-binding by 65%.">
    <original>R</original>
    <variation>A</variation>
    <location>
        <position position="58"/>
    </location>
</feature>
<feature type="mutagenesis site" description="Reduces DNA-binding by 86%.">
    <original>S</original>
    <variation>A</variation>
    <location>
        <position position="59"/>
    </location>
</feature>
<feature type="mutagenesis site" description="Reduces DNA-binding by 67%." evidence="12">
    <original>R</original>
    <variation>A</variation>
    <location>
        <position position="97"/>
    </location>
</feature>
<feature type="mutagenesis site" description="No effect on DNA-binding but strongly reduces progress through meiosis and sporulation." evidence="6">
    <original>K</original>
    <variation>A</variation>
    <location>
        <position position="110"/>
    </location>
</feature>
<feature type="mutagenesis site" description="Reduces DNA-binding by 95% and abolishes sporulation." evidence="6 12">
    <original>R</original>
    <variation>A</variation>
    <location>
        <position position="111"/>
    </location>
</feature>
<feature type="mutagenesis site" description="Reduces DNA-binding by 80% and abolishes sporulation." evidence="6 12">
    <original>Y</original>
    <variation>A</variation>
    <location>
        <position position="113"/>
    </location>
</feature>
<feature type="mutagenesis site" description="Reduces DNA-binding by 80% and strongly reduces progress through meiosis and sporulation." evidence="6">
    <original>H</original>
    <variation>A</variation>
    <location>
        <position position="173"/>
    </location>
</feature>
<feature type="mutagenesis site" description="Reduces DNA-binding by 50% but does not abolish sporulation." evidence="6">
    <original>K</original>
    <variation>A</variation>
    <location>
        <position position="176"/>
    </location>
</feature>
<feature type="mutagenesis site" description="Reduces DNA-binding by 96% and abolishes sporulation." evidence="6">
    <original>R</original>
    <variation>A</variation>
    <location>
        <position position="177"/>
    </location>
</feature>
<feature type="mutagenesis site" description="No effect on DNA-binding but strongly reduces progress through meiosis and sporulation." evidence="6">
    <original>R</original>
    <variation>A</variation>
    <location>
        <position position="202"/>
    </location>
</feature>
<feature type="mutagenesis site" description="Reduces DNA-binding by 50% and abolishes sporulation." evidence="6 12">
    <original>R</original>
    <variation>A</variation>
    <location>
        <position position="208"/>
    </location>
</feature>
<feature type="mutagenesis site" description="Reduces DNA-binding by 93% and abolishes sporulation." evidence="6 12">
    <original>R</original>
    <variation>A</variation>
    <location>
        <position position="254"/>
    </location>
</feature>
<feature type="mutagenesis site" description="Reduces DNA-binding by 50% and abolishes sporulation." evidence="6 12">
    <original>R</original>
    <variation>A</variation>
    <location>
        <position position="326"/>
    </location>
</feature>
<feature type="sequence conflict" description="In Ref. 15." evidence="16" ref="15">
    <original>I</original>
    <variation>T</variation>
    <location>
        <position position="200"/>
    </location>
</feature>
<feature type="sequence conflict" description="In Ref. 16." evidence="16" ref="16">
    <original>M</original>
    <variation>T</variation>
    <location>
        <position position="213"/>
    </location>
</feature>
<feature type="sequence conflict" description="In Ref. 16." evidence="16" ref="16">
    <original>D</original>
    <variation>N</variation>
    <location>
        <position position="225"/>
    </location>
</feature>
<feature type="sequence conflict" description="In Ref. 16." evidence="16" ref="16">
    <original>S</original>
    <variation>F</variation>
    <location>
        <position position="267"/>
    </location>
</feature>
<feature type="sequence conflict" description="In Ref. 4; AAU09742." evidence="16" ref="4">
    <original>L</original>
    <variation>S</variation>
    <location>
        <position position="363"/>
    </location>
</feature>
<feature type="sequence conflict" description="In Ref. 1; AAA92299." evidence="16" ref="1">
    <original>F</original>
    <variation>L</variation>
    <location>
        <position position="493"/>
    </location>
</feature>
<feature type="sequence conflict" description="In Ref. 1; AAA92299." evidence="16" ref="1">
    <original>P</original>
    <variation>N</variation>
    <location>
        <position position="568"/>
    </location>
</feature>
<feature type="strand" evidence="20">
    <location>
        <begin position="35"/>
        <end position="38"/>
    </location>
</feature>
<feature type="strand" evidence="20">
    <location>
        <begin position="44"/>
        <end position="47"/>
    </location>
</feature>
<feature type="turn" evidence="20">
    <location>
        <begin position="50"/>
        <end position="52"/>
    </location>
</feature>
<feature type="helix" evidence="20">
    <location>
        <begin position="60"/>
        <end position="62"/>
    </location>
</feature>
<feature type="strand" evidence="20">
    <location>
        <begin position="70"/>
        <end position="74"/>
    </location>
</feature>
<feature type="strand" evidence="20">
    <location>
        <begin position="78"/>
        <end position="80"/>
    </location>
</feature>
<feature type="turn" evidence="20">
    <location>
        <begin position="81"/>
        <end position="83"/>
    </location>
</feature>
<feature type="strand" evidence="20">
    <location>
        <begin position="90"/>
        <end position="98"/>
    </location>
</feature>
<feature type="strand" evidence="20">
    <location>
        <begin position="100"/>
        <end position="102"/>
    </location>
</feature>
<feature type="strand" evidence="20">
    <location>
        <begin position="105"/>
        <end position="109"/>
    </location>
</feature>
<feature type="strand" evidence="20">
    <location>
        <begin position="114"/>
        <end position="121"/>
    </location>
</feature>
<feature type="helix" evidence="20">
    <location>
        <begin position="127"/>
        <end position="132"/>
    </location>
</feature>
<feature type="strand" evidence="20">
    <location>
        <begin position="135"/>
        <end position="137"/>
    </location>
</feature>
<feature type="turn" evidence="19">
    <location>
        <begin position="141"/>
        <end position="143"/>
    </location>
</feature>
<feature type="strand" evidence="21">
    <location>
        <begin position="147"/>
        <end position="149"/>
    </location>
</feature>
<feature type="strand" evidence="20">
    <location>
        <begin position="152"/>
        <end position="161"/>
    </location>
</feature>
<feature type="turn" evidence="20">
    <location>
        <begin position="162"/>
        <end position="164"/>
    </location>
</feature>
<feature type="strand" evidence="18">
    <location>
        <begin position="166"/>
        <end position="168"/>
    </location>
</feature>
<feature type="strand" evidence="20">
    <location>
        <begin position="170"/>
        <end position="173"/>
    </location>
</feature>
<feature type="helix" evidence="20">
    <location>
        <begin position="177"/>
        <end position="179"/>
    </location>
</feature>
<feature type="strand" evidence="20">
    <location>
        <begin position="188"/>
        <end position="190"/>
    </location>
</feature>
<feature type="helix" evidence="20">
    <location>
        <begin position="198"/>
        <end position="203"/>
    </location>
</feature>
<feature type="turn" evidence="20">
    <location>
        <begin position="204"/>
        <end position="206"/>
    </location>
</feature>
<feature type="helix" evidence="20">
    <location>
        <begin position="210"/>
        <end position="220"/>
    </location>
</feature>
<feature type="strand" evidence="20">
    <location>
        <begin position="221"/>
        <end position="223"/>
    </location>
</feature>
<feature type="helix" evidence="20">
    <location>
        <begin position="224"/>
        <end position="226"/>
    </location>
</feature>
<feature type="helix" evidence="20">
    <location>
        <begin position="229"/>
        <end position="231"/>
    </location>
</feature>
<feature type="helix" evidence="20">
    <location>
        <begin position="237"/>
        <end position="240"/>
    </location>
</feature>
<feature type="strand" evidence="20">
    <location>
        <begin position="241"/>
        <end position="257"/>
    </location>
</feature>
<feature type="strand" evidence="20">
    <location>
        <begin position="273"/>
        <end position="283"/>
    </location>
</feature>
<feature type="helix" evidence="17">
    <location>
        <begin position="285"/>
        <end position="287"/>
    </location>
</feature>
<feature type="strand" evidence="17">
    <location>
        <begin position="288"/>
        <end position="291"/>
    </location>
</feature>
<feature type="strand" evidence="20">
    <location>
        <begin position="297"/>
        <end position="301"/>
    </location>
</feature>
<feature type="strand" evidence="20">
    <location>
        <begin position="303"/>
        <end position="317"/>
    </location>
</feature>
<feature type="strand" evidence="20">
    <location>
        <begin position="321"/>
        <end position="324"/>
    </location>
</feature>
<feature type="helix" evidence="20">
    <location>
        <begin position="328"/>
        <end position="330"/>
    </location>
</feature>
<feature type="helix" evidence="20">
    <location>
        <begin position="332"/>
        <end position="334"/>
    </location>
</feature>
<organism>
    <name type="scientific">Saccharomyces cerevisiae (strain ATCC 204508 / S288c)</name>
    <name type="common">Baker's yeast</name>
    <dbReference type="NCBI Taxonomy" id="559292"/>
    <lineage>
        <taxon>Eukaryota</taxon>
        <taxon>Fungi</taxon>
        <taxon>Dikarya</taxon>
        <taxon>Ascomycota</taxon>
        <taxon>Saccharomycotina</taxon>
        <taxon>Saccharomycetes</taxon>
        <taxon>Saccharomycetales</taxon>
        <taxon>Saccharomycetaceae</taxon>
        <taxon>Saccharomyces</taxon>
    </lineage>
</organism>
<accession>P38830</accession>
<accession>D3DL74</accession>
<accession>Q66R83</accession>
<proteinExistence type="evidence at protein level"/>
<reference key="1">
    <citation type="journal article" date="1995" name="Mol. Cell. Biol.">
        <title>NDT80, a meiosis-specific gene required for exit from pachytene in Saccharomyces cerevisiae.</title>
        <authorList>
            <person name="Xu L."/>
            <person name="Ajimura M."/>
            <person name="Padmore R."/>
            <person name="Klein C."/>
            <person name="Kleckner N."/>
        </authorList>
    </citation>
    <scope>NUCLEOTIDE SEQUENCE [GENOMIC DNA]</scope>
    <scope>FUNCTION</scope>
    <source>
        <strain>S288c / GRF88</strain>
    </source>
</reference>
<reference key="2">
    <citation type="journal article" date="1994" name="Science">
        <title>Complete nucleotide sequence of Saccharomyces cerevisiae chromosome VIII.</title>
        <authorList>
            <person name="Johnston M."/>
            <person name="Andrews S."/>
            <person name="Brinkman R."/>
            <person name="Cooper J."/>
            <person name="Ding H."/>
            <person name="Dover J."/>
            <person name="Du Z."/>
            <person name="Favello A."/>
            <person name="Fulton L."/>
            <person name="Gattung S."/>
            <person name="Geisel C."/>
            <person name="Kirsten J."/>
            <person name="Kucaba T."/>
            <person name="Hillier L.W."/>
            <person name="Jier M."/>
            <person name="Johnston L."/>
            <person name="Langston Y."/>
            <person name="Latreille P."/>
            <person name="Louis E.J."/>
            <person name="Macri C."/>
            <person name="Mardis E."/>
            <person name="Menezes S."/>
            <person name="Mouser L."/>
            <person name="Nhan M."/>
            <person name="Rifkin L."/>
            <person name="Riles L."/>
            <person name="St Peter H."/>
            <person name="Trevaskis E."/>
            <person name="Vaughan K."/>
            <person name="Vignati D."/>
            <person name="Wilcox L."/>
            <person name="Wohldman P."/>
            <person name="Waterston R."/>
            <person name="Wilson R."/>
            <person name="Vaudin M."/>
        </authorList>
    </citation>
    <scope>NUCLEOTIDE SEQUENCE [LARGE SCALE GENOMIC DNA]</scope>
    <source>
        <strain>ATCC 204508 / S288c</strain>
    </source>
</reference>
<reference key="3">
    <citation type="journal article" date="2014" name="G3 (Bethesda)">
        <title>The reference genome sequence of Saccharomyces cerevisiae: Then and now.</title>
        <authorList>
            <person name="Engel S.R."/>
            <person name="Dietrich F.S."/>
            <person name="Fisk D.G."/>
            <person name="Binkley G."/>
            <person name="Balakrishnan R."/>
            <person name="Costanzo M.C."/>
            <person name="Dwight S.S."/>
            <person name="Hitz B.C."/>
            <person name="Karra K."/>
            <person name="Nash R.S."/>
            <person name="Weng S."/>
            <person name="Wong E.D."/>
            <person name="Lloyd P."/>
            <person name="Skrzypek M.S."/>
            <person name="Miyasato S.R."/>
            <person name="Simison M."/>
            <person name="Cherry J.M."/>
        </authorList>
    </citation>
    <scope>GENOME REANNOTATION</scope>
    <source>
        <strain>ATCC 204508 / S288c</strain>
    </source>
</reference>
<reference key="4">
    <citation type="journal article" date="2007" name="Genome Res.">
        <title>Approaching a complete repository of sequence-verified protein-encoding clones for Saccharomyces cerevisiae.</title>
        <authorList>
            <person name="Hu Y."/>
            <person name="Rolfs A."/>
            <person name="Bhullar B."/>
            <person name="Murthy T.V.S."/>
            <person name="Zhu C."/>
            <person name="Berger M.F."/>
            <person name="Camargo A.A."/>
            <person name="Kelley F."/>
            <person name="McCarron S."/>
            <person name="Jepson D."/>
            <person name="Richardson A."/>
            <person name="Raphael J."/>
            <person name="Moreira D."/>
            <person name="Taycher E."/>
            <person name="Zuo D."/>
            <person name="Mohr S."/>
            <person name="Kane M.F."/>
            <person name="Williamson J."/>
            <person name="Simpson A.J.G."/>
            <person name="Bulyk M.L."/>
            <person name="Harlow E."/>
            <person name="Marsischky G."/>
            <person name="Kolodner R.D."/>
            <person name="LaBaer J."/>
        </authorList>
    </citation>
    <scope>NUCLEOTIDE SEQUENCE [GENOMIC DNA]</scope>
    <source>
        <strain>ATCC 204508 / S288c</strain>
    </source>
</reference>
<reference key="5">
    <citation type="journal article" date="1998" name="Mol. Cell">
        <title>Gametogenesis in yeast is regulated by a transcriptional cascade dependent on Ndt80.</title>
        <authorList>
            <person name="Chu S."/>
            <person name="Herskowitz I."/>
        </authorList>
    </citation>
    <scope>FUNCTION</scope>
    <scope>DNA-BINDING</scope>
</reference>
<reference key="6">
    <citation type="journal article" date="1998" name="Mol. Cell. Biol.">
        <title>NDT80 and the meiotic recombination checkpoint regulate expression of middle sporulation-specific genes in Saccharomyces cerevisiae.</title>
        <authorList>
            <person name="Hepworth S.R."/>
            <person name="Friesen H."/>
            <person name="Segall J."/>
        </authorList>
    </citation>
    <scope>FUNCTION</scope>
    <scope>INDUCTION</scope>
</reference>
<reference key="7">
    <citation type="journal article" date="2000" name="Proc. Natl. Acad. Sci. U.S.A.">
        <title>The pachytene checkpoint prevents accumulation and phosphorylation of the meiosis-specific transcription factor Ndt80.</title>
        <authorList>
            <person name="Tung K.-S."/>
            <person name="Hong E.-J.E."/>
            <person name="Roeder G.S."/>
        </authorList>
    </citation>
    <scope>PHOSPHORYLATION</scope>
    <scope>SUBCELLULAR LOCATION</scope>
</reference>
<reference key="8">
    <citation type="journal article" date="2002" name="Mol. Cell. Biol.">
        <title>Regulation of the premiddle and middle phases of expression of the NDT80 gene during sporulation of Saccharomyces cerevisiae.</title>
        <authorList>
            <person name="Pak J."/>
            <person name="Segall J."/>
        </authorList>
    </citation>
    <scope>INDUCTION</scope>
</reference>
<reference key="9">
    <citation type="journal article" date="2002" name="Mol. Cell. Biol.">
        <title>Phosphorylation and maximal activity of Saccharomyces cerevisiae meiosis-specific transcription factor Ndt80 is dependent on Ime2.</title>
        <authorList>
            <person name="Sopko R."/>
            <person name="Raithatha S."/>
            <person name="Stuart D.T."/>
        </authorList>
    </citation>
    <scope>PHOSPHORYLATION BY IME2</scope>
</reference>
<reference key="10">
    <citation type="journal article" date="2003" name="Genes Dev.">
        <title>Control of landmark events in meiosis by the CDK Cdc28 and the meiosis-specific kinase Ime2.</title>
        <authorList>
            <person name="Benjamin K.R."/>
            <person name="Zhang C."/>
            <person name="Shokat K.M."/>
            <person name="Herskowitz I."/>
        </authorList>
    </citation>
    <scope>PHOSPHORYLATION BY IME2</scope>
    <scope>INDUCTION</scope>
</reference>
<reference key="11">
    <citation type="journal article" date="2003" name="Mol. Cell. Biol.">
        <title>Sum1 and Ndt80 proteins compete for binding to middle sporulation element sequences that control meiotic gene expression.</title>
        <authorList>
            <person name="Pierce M."/>
            <person name="Benjamin K.R."/>
            <person name="Montano S.P."/>
            <person name="Georgiadis M.M."/>
            <person name="Winter E."/>
            <person name="Vershon A.K."/>
        </authorList>
    </citation>
    <scope>FUNCTION</scope>
</reference>
<reference key="12">
    <citation type="journal article" date="2003" name="Mol. Genet. Genomics">
        <title>Activity of phosphoforms and truncated versions of Ndt80, a checkpoint-regulated sporulation-specific transcription factor of Saccharomyces cerevisiae.</title>
        <authorList>
            <person name="Shubassi G."/>
            <person name="Luca N."/>
            <person name="Pak J."/>
            <person name="Segall J."/>
        </authorList>
    </citation>
    <scope>PHOSPHORYLATION</scope>
    <scope>INDUCTION</scope>
</reference>
<reference key="13">
    <citation type="journal article" date="2004" name="Nucleic Acids Res.">
        <title>Characterization of critical interactions between Ndt80 and MSE DNA defining a novel family of Ig-fold transcription factors.</title>
        <authorList>
            <person name="Fingerman I.M."/>
            <person name="Sutphen K."/>
            <person name="Montano S.P."/>
            <person name="Georgiadis M.M."/>
            <person name="Vershon A.K."/>
        </authorList>
    </citation>
    <scope>DNA-BINDING</scope>
    <scope>MUTAGENESIS OF LYS-50; LYS-54; 57-PRO--SER-59; ARG-97; ARG-111; TYR-113; 176-LYS-ARG-177; ARG-208; ARG-254 AND ARG-326</scope>
</reference>
<reference key="14">
    <citation type="journal article" date="2004" name="Protein Expr. Purif.">
        <title>Purification and characterization of the DNA binding domain of Saccharomyces cerevisiae meiosis-specific transcription factor Ndt80.</title>
        <authorList>
            <person name="Sopko R."/>
            <person name="Stuart D.T."/>
        </authorList>
    </citation>
    <scope>PHOSPHORYLATION BY IME2</scope>
    <scope>DNA-BINDING</scope>
</reference>
<reference key="15">
    <citation type="journal article" date="2002" name="EMBO J.">
        <title>Structure of the sporulation-specific transcription factor Ndt80 bound to DNA.</title>
        <authorList>
            <person name="Lamoureux J.S."/>
            <person name="Stuart D.T."/>
            <person name="Tsang R."/>
            <person name="Wu C."/>
            <person name="Glover J.N.M."/>
        </authorList>
    </citation>
    <scope>X-RAY CRYSTALLOGRAPHY (1.4 ANGSTROMS) OF 1-340 IN COMPLEX WITH DNA</scope>
</reference>
<reference key="16">
    <citation type="journal article" date="2002" name="Proc. Natl. Acad. Sci. U.S.A.">
        <title>Crystal structure of the DNA-binding domain from Ndt80, a transcriptional activator required for meiosis in yeast.</title>
        <authorList>
            <person name="Montano S.P."/>
            <person name="Cote M.L."/>
            <person name="Fingerman I.M."/>
            <person name="Pierce M."/>
            <person name="Vershon A.K."/>
            <person name="Georgiadis M.M."/>
        </authorList>
    </citation>
    <scope>X-RAY CRYSTALLOGRAPHY (2.3 ANGSTROMS) OF 59-330</scope>
    <scope>MUTAGENESIS OF LYS-110; ARG-111; TYR-113; HIS-173; LYS-176; ARG-177; ARG-202; ARG-208; ARG-254 AND ARG-326</scope>
    <scope>SUBUNIT</scope>
</reference>
<reference key="17">
    <citation type="journal article" date="2006" name="Structure">
        <title>Principles of protein-DNA recognition revealed in the structural analysis of Ndt80-MSE DNA complexes.</title>
        <authorList>
            <person name="Lamoureux J.S."/>
            <person name="Glover J.N.M."/>
        </authorList>
    </citation>
    <scope>X-RAY CRYSTALLOGRAPHY (1.55 ANGSTROMS) OF 1-340 IN COMPLEXES WITH TARGET DNA</scope>
</reference>
<evidence type="ECO:0000255" key="1">
    <source>
        <dbReference type="PROSITE-ProRule" id="PRU00850"/>
    </source>
</evidence>
<evidence type="ECO:0000256" key="2">
    <source>
        <dbReference type="SAM" id="MobiDB-lite"/>
    </source>
</evidence>
<evidence type="ECO:0000269" key="3">
    <source>
    </source>
</evidence>
<evidence type="ECO:0000269" key="4">
    <source>
    </source>
</evidence>
<evidence type="ECO:0000269" key="5">
    <source>
    </source>
</evidence>
<evidence type="ECO:0000269" key="6">
    <source>
    </source>
</evidence>
<evidence type="ECO:0000269" key="7">
    <source>
    </source>
</evidence>
<evidence type="ECO:0000269" key="8">
    <source>
    </source>
</evidence>
<evidence type="ECO:0000269" key="9">
    <source>
    </source>
</evidence>
<evidence type="ECO:0000269" key="10">
    <source>
    </source>
</evidence>
<evidence type="ECO:0000269" key="11">
    <source>
    </source>
</evidence>
<evidence type="ECO:0000269" key="12">
    <source>
    </source>
</evidence>
<evidence type="ECO:0000269" key="13">
    <source>
    </source>
</evidence>
<evidence type="ECO:0000269" key="14">
    <source>
    </source>
</evidence>
<evidence type="ECO:0000269" key="15">
    <source>
    </source>
</evidence>
<evidence type="ECO:0000305" key="16"/>
<evidence type="ECO:0007829" key="17">
    <source>
        <dbReference type="PDB" id="1M6U"/>
    </source>
</evidence>
<evidence type="ECO:0007829" key="18">
    <source>
        <dbReference type="PDB" id="1M7U"/>
    </source>
</evidence>
<evidence type="ECO:0007829" key="19">
    <source>
        <dbReference type="PDB" id="1MN4"/>
    </source>
</evidence>
<evidence type="ECO:0007829" key="20">
    <source>
        <dbReference type="PDB" id="1MNN"/>
    </source>
</evidence>
<evidence type="ECO:0007829" key="21">
    <source>
        <dbReference type="PDB" id="2EVG"/>
    </source>
</evidence>
<gene>
    <name type="primary">NDT80</name>
    <name type="synonym">DAS1</name>
    <name type="ordered locus">YHR124W</name>
</gene>
<dbReference type="EMBL" id="U35122">
    <property type="protein sequence ID" value="AAA92299.1"/>
    <property type="molecule type" value="Genomic_DNA"/>
</dbReference>
<dbReference type="EMBL" id="U10398">
    <property type="protein sequence ID" value="AAB68408.1"/>
    <property type="molecule type" value="Genomic_DNA"/>
</dbReference>
<dbReference type="EMBL" id="AY723825">
    <property type="protein sequence ID" value="AAU09742.1"/>
    <property type="molecule type" value="Genomic_DNA"/>
</dbReference>
<dbReference type="EMBL" id="BK006934">
    <property type="protein sequence ID" value="DAA06818.1"/>
    <property type="molecule type" value="Genomic_DNA"/>
</dbReference>
<dbReference type="PIR" id="S48968">
    <property type="entry name" value="S48968"/>
</dbReference>
<dbReference type="RefSeq" id="NP_011992.1">
    <property type="nucleotide sequence ID" value="NM_001179254.1"/>
</dbReference>
<dbReference type="PDB" id="1M6U">
    <property type="method" value="X-ray"/>
    <property type="resolution" value="2.30 A"/>
    <property type="chains" value="A/B=59-330"/>
</dbReference>
<dbReference type="PDB" id="1M7U">
    <property type="method" value="X-ray"/>
    <property type="resolution" value="2.80 A"/>
    <property type="chains" value="A/B=59-330"/>
</dbReference>
<dbReference type="PDB" id="1MN4">
    <property type="method" value="X-ray"/>
    <property type="resolution" value="2.20 A"/>
    <property type="chains" value="A=59-340"/>
</dbReference>
<dbReference type="PDB" id="1MNN">
    <property type="method" value="X-ray"/>
    <property type="resolution" value="1.40 A"/>
    <property type="chains" value="A=1-340"/>
</dbReference>
<dbReference type="PDB" id="2ETW">
    <property type="method" value="X-ray"/>
    <property type="resolution" value="1.67 A"/>
    <property type="chains" value="A=1-340"/>
</dbReference>
<dbReference type="PDB" id="2EUV">
    <property type="method" value="X-ray"/>
    <property type="resolution" value="1.94 A"/>
    <property type="chains" value="A=1-340"/>
</dbReference>
<dbReference type="PDB" id="2EUW">
    <property type="method" value="X-ray"/>
    <property type="resolution" value="1.68 A"/>
    <property type="chains" value="A=1-340"/>
</dbReference>
<dbReference type="PDB" id="2EUX">
    <property type="method" value="X-ray"/>
    <property type="resolution" value="1.57 A"/>
    <property type="chains" value="A=1-340"/>
</dbReference>
<dbReference type="PDB" id="2EUZ">
    <property type="method" value="X-ray"/>
    <property type="resolution" value="1.56 A"/>
    <property type="chains" value="A=1-340"/>
</dbReference>
<dbReference type="PDB" id="2EVF">
    <property type="method" value="X-ray"/>
    <property type="resolution" value="1.56 A"/>
    <property type="chains" value="A=1-340"/>
</dbReference>
<dbReference type="PDB" id="2EVG">
    <property type="method" value="X-ray"/>
    <property type="resolution" value="1.55 A"/>
    <property type="chains" value="A=1-340"/>
</dbReference>
<dbReference type="PDB" id="2EVH">
    <property type="method" value="X-ray"/>
    <property type="resolution" value="1.99 A"/>
    <property type="chains" value="A=1-340"/>
</dbReference>
<dbReference type="PDB" id="2EVI">
    <property type="method" value="X-ray"/>
    <property type="resolution" value="1.80 A"/>
    <property type="chains" value="A=1-340"/>
</dbReference>
<dbReference type="PDB" id="2EVJ">
    <property type="method" value="X-ray"/>
    <property type="resolution" value="1.89 A"/>
    <property type="chains" value="A=1-340"/>
</dbReference>
<dbReference type="PDBsum" id="1M6U"/>
<dbReference type="PDBsum" id="1M7U"/>
<dbReference type="PDBsum" id="1MN4"/>
<dbReference type="PDBsum" id="1MNN"/>
<dbReference type="PDBsum" id="2ETW"/>
<dbReference type="PDBsum" id="2EUV"/>
<dbReference type="PDBsum" id="2EUW"/>
<dbReference type="PDBsum" id="2EUX"/>
<dbReference type="PDBsum" id="2EUZ"/>
<dbReference type="PDBsum" id="2EVF"/>
<dbReference type="PDBsum" id="2EVG"/>
<dbReference type="PDBsum" id="2EVH"/>
<dbReference type="PDBsum" id="2EVI"/>
<dbReference type="PDBsum" id="2EVJ"/>
<dbReference type="SMR" id="P38830"/>
<dbReference type="BioGRID" id="36557">
    <property type="interactions" value="123"/>
</dbReference>
<dbReference type="FunCoup" id="P38830">
    <property type="interactions" value="2215"/>
</dbReference>
<dbReference type="IntAct" id="P38830">
    <property type="interactions" value="3"/>
</dbReference>
<dbReference type="MINT" id="P38830"/>
<dbReference type="STRING" id="4932.YHR124W"/>
<dbReference type="PaxDb" id="4932-YHR124W"/>
<dbReference type="PeptideAtlas" id="P38830"/>
<dbReference type="EnsemblFungi" id="YHR124W_mRNA">
    <property type="protein sequence ID" value="YHR124W"/>
    <property type="gene ID" value="YHR124W"/>
</dbReference>
<dbReference type="GeneID" id="856524"/>
<dbReference type="KEGG" id="sce:YHR124W"/>
<dbReference type="AGR" id="SGD:S000001166"/>
<dbReference type="SGD" id="S000001166">
    <property type="gene designation" value="NDT80"/>
</dbReference>
<dbReference type="VEuPathDB" id="FungiDB:YHR124W"/>
<dbReference type="eggNOG" id="ENOG502R1FS">
    <property type="taxonomic scope" value="Eukaryota"/>
</dbReference>
<dbReference type="HOGENOM" id="CLU_015202_0_0_1"/>
<dbReference type="InParanoid" id="P38830"/>
<dbReference type="OrthoDB" id="2288358at2759"/>
<dbReference type="BioCyc" id="YEAST:G3O-31165-MONOMER"/>
<dbReference type="BioGRID-ORCS" id="856524">
    <property type="hits" value="0 hits in 13 CRISPR screens"/>
</dbReference>
<dbReference type="EvolutionaryTrace" id="P38830"/>
<dbReference type="PRO" id="PR:P38830"/>
<dbReference type="Proteomes" id="UP000002311">
    <property type="component" value="Chromosome VIII"/>
</dbReference>
<dbReference type="RNAct" id="P38830">
    <property type="molecule type" value="protein"/>
</dbReference>
<dbReference type="GO" id="GO:0000228">
    <property type="term" value="C:nuclear chromosome"/>
    <property type="evidence" value="ECO:0000314"/>
    <property type="project" value="SGD"/>
</dbReference>
<dbReference type="GO" id="GO:0003700">
    <property type="term" value="F:DNA-binding transcription factor activity"/>
    <property type="evidence" value="ECO:0000314"/>
    <property type="project" value="SGD"/>
</dbReference>
<dbReference type="GO" id="GO:0043565">
    <property type="term" value="F:sequence-specific DNA binding"/>
    <property type="evidence" value="ECO:0007005"/>
    <property type="project" value="SGD"/>
</dbReference>
<dbReference type="GO" id="GO:0051301">
    <property type="term" value="P:cell division"/>
    <property type="evidence" value="ECO:0007669"/>
    <property type="project" value="UniProtKB-KW"/>
</dbReference>
<dbReference type="GO" id="GO:0051321">
    <property type="term" value="P:meiotic cell cycle"/>
    <property type="evidence" value="ECO:0000315"/>
    <property type="project" value="SGD"/>
</dbReference>
<dbReference type="GO" id="GO:0045944">
    <property type="term" value="P:positive regulation of transcription by RNA polymerase II"/>
    <property type="evidence" value="ECO:0000315"/>
    <property type="project" value="SGD"/>
</dbReference>
<dbReference type="GO" id="GO:0043934">
    <property type="term" value="P:sporulation"/>
    <property type="evidence" value="ECO:0000315"/>
    <property type="project" value="SGD"/>
</dbReference>
<dbReference type="FunFam" id="2.60.40.1390:FF:000005">
    <property type="entry name" value="Meiosis-specific transcription factor NDT80"/>
    <property type="match status" value="1"/>
</dbReference>
<dbReference type="Gene3D" id="2.60.40.1390">
    <property type="entry name" value="NDT80 DNA-binding domain"/>
    <property type="match status" value="1"/>
</dbReference>
<dbReference type="InterPro" id="IPR052605">
    <property type="entry name" value="Fungal_trans_regulator"/>
</dbReference>
<dbReference type="InterPro" id="IPR024061">
    <property type="entry name" value="NDT80_DNA-bd_dom"/>
</dbReference>
<dbReference type="InterPro" id="IPR037141">
    <property type="entry name" value="NDT80_DNA-bd_dom_sf"/>
</dbReference>
<dbReference type="InterPro" id="IPR008967">
    <property type="entry name" value="p53-like_TF_DNA-bd_sf"/>
</dbReference>
<dbReference type="PANTHER" id="PTHR35144">
    <property type="entry name" value="MEIOSIS-SPECIFIC TRANSCRIPTION FACTOR NDT80"/>
    <property type="match status" value="1"/>
</dbReference>
<dbReference type="PANTHER" id="PTHR35144:SF2">
    <property type="entry name" value="MEIOSIS-SPECIFIC TRANSCRIPTION FACTOR NDT80"/>
    <property type="match status" value="1"/>
</dbReference>
<dbReference type="Pfam" id="PF05224">
    <property type="entry name" value="NDT80_PhoG"/>
    <property type="match status" value="1"/>
</dbReference>
<dbReference type="SUPFAM" id="SSF49417">
    <property type="entry name" value="p53-like transcription factors"/>
    <property type="match status" value="1"/>
</dbReference>
<dbReference type="PROSITE" id="PS51517">
    <property type="entry name" value="NDT80"/>
    <property type="match status" value="1"/>
</dbReference>
<protein>
    <recommendedName>
        <fullName>Meiosis-specific transcription factor NDT80</fullName>
    </recommendedName>
</protein>
<comment type="function">
    <text evidence="9 13 14 15">Transcription factor required for successful completion of meiosis and spore formation. Gets activated after completion of meiotic recombination at the end of prophase I. Recognizes and binds to the middle sporulation element (MSE) 5'-C[AG]CAAA[AT]-3' in the promoter region of stage-specific genes that are required for progression through meiosis and sporulation. Competes for binding to MSE with the transcriptional repressor SUM1, which represses middle sporulation-specific genes during mitosis and early sporulation.</text>
</comment>
<comment type="subunit">
    <text evidence="6 7">Binds to DNA as a monomer.</text>
</comment>
<comment type="subcellular location">
    <subcellularLocation>
        <location evidence="3">Nucleus</location>
    </subcellularLocation>
</comment>
<comment type="induction">
    <text evidence="4 8 10 15">Induced during prophase I of meiosis. Requires protein kinase IME2 for initial expression and continued transcription during meiotic divisions. Can autoactivate its own synthesis.</text>
</comment>
<comment type="PTM">
    <text evidence="3 5 8 10 11">Phosphorylated by pachytene checkpoint kinase IME2, but also phosphorylated in an IME2-independent manner. Phosphorylation probably eliminates SUM1-mediated repression and is also required for full transcriptional activation activity. Phosphorylation of the DNA-binding domain by IME2 does not alter DNA binding affinity.</text>
</comment>
<keyword id="KW-0002">3D-structure</keyword>
<keyword id="KW-0131">Cell cycle</keyword>
<keyword id="KW-0132">Cell division</keyword>
<keyword id="KW-0238">DNA-binding</keyword>
<keyword id="KW-0469">Meiosis</keyword>
<keyword id="KW-0539">Nucleus</keyword>
<keyword id="KW-0597">Phosphoprotein</keyword>
<keyword id="KW-1185">Reference proteome</keyword>
<keyword id="KW-0804">Transcription</keyword>
<keyword id="KW-0805">Transcription regulation</keyword>